<protein>
    <recommendedName>
        <fullName evidence="2">GTP cyclohydrolase 1</fullName>
        <ecNumber evidence="2">3.5.4.16</ecNumber>
    </recommendedName>
    <alternativeName>
        <fullName evidence="2">GTP cyclohydrolase I</fullName>
        <shortName evidence="2">GTP-CH-I</shortName>
    </alternativeName>
</protein>
<sequence>MALSEAAVKVQAALLERGLETPMLPSVYSSEERKDKIEHHMKEILTLMSLDLSDDSLADTPRRIAKMYVDEIFSGLDYENFPKITVIDNKMGFDEMVRVQDISLTSTCEHHLVTIDGTATIAYLPRKKIIGLSKINRIVRFFAQRPQVQERLTQQVLVALQTLLETKDVAVKMDAVHYCVKSRGVMDSTSSTTTTALGGIFKSNPATRAEFLHQ</sequence>
<gene>
    <name evidence="2" type="primary">folE</name>
    <name type="ordered locus">Sputcn32_0458</name>
</gene>
<name>GCH1_SHEPC</name>
<organism>
    <name type="scientific">Shewanella putrefaciens (strain CN-32 / ATCC BAA-453)</name>
    <dbReference type="NCBI Taxonomy" id="319224"/>
    <lineage>
        <taxon>Bacteria</taxon>
        <taxon>Pseudomonadati</taxon>
        <taxon>Pseudomonadota</taxon>
        <taxon>Gammaproteobacteria</taxon>
        <taxon>Alteromonadales</taxon>
        <taxon>Shewanellaceae</taxon>
        <taxon>Shewanella</taxon>
    </lineage>
</organism>
<reference key="1">
    <citation type="submission" date="2007-04" db="EMBL/GenBank/DDBJ databases">
        <title>Complete sequence of Shewanella putrefaciens CN-32.</title>
        <authorList>
            <consortium name="US DOE Joint Genome Institute"/>
            <person name="Copeland A."/>
            <person name="Lucas S."/>
            <person name="Lapidus A."/>
            <person name="Barry K."/>
            <person name="Detter J.C."/>
            <person name="Glavina del Rio T."/>
            <person name="Hammon N."/>
            <person name="Israni S."/>
            <person name="Dalin E."/>
            <person name="Tice H."/>
            <person name="Pitluck S."/>
            <person name="Chain P."/>
            <person name="Malfatti S."/>
            <person name="Shin M."/>
            <person name="Vergez L."/>
            <person name="Schmutz J."/>
            <person name="Larimer F."/>
            <person name="Land M."/>
            <person name="Hauser L."/>
            <person name="Kyrpides N."/>
            <person name="Mikhailova N."/>
            <person name="Romine M.F."/>
            <person name="Fredrickson J."/>
            <person name="Tiedje J."/>
            <person name="Richardson P."/>
        </authorList>
    </citation>
    <scope>NUCLEOTIDE SEQUENCE [LARGE SCALE GENOMIC DNA]</scope>
    <source>
        <strain>CN-32 / ATCC BAA-453</strain>
    </source>
</reference>
<evidence type="ECO:0000250" key="1"/>
<evidence type="ECO:0000255" key="2">
    <source>
        <dbReference type="HAMAP-Rule" id="MF_00223"/>
    </source>
</evidence>
<dbReference type="EC" id="3.5.4.16" evidence="2"/>
<dbReference type="EMBL" id="CP000681">
    <property type="protein sequence ID" value="ABP74190.1"/>
    <property type="molecule type" value="Genomic_DNA"/>
</dbReference>
<dbReference type="SMR" id="A4Y2K7"/>
<dbReference type="STRING" id="319224.Sputcn32_0458"/>
<dbReference type="KEGG" id="spc:Sputcn32_0458"/>
<dbReference type="eggNOG" id="COG0302">
    <property type="taxonomic scope" value="Bacteria"/>
</dbReference>
<dbReference type="HOGENOM" id="CLU_049768_3_2_6"/>
<dbReference type="UniPathway" id="UPA00848">
    <property type="reaction ID" value="UER00151"/>
</dbReference>
<dbReference type="GO" id="GO:0005737">
    <property type="term" value="C:cytoplasm"/>
    <property type="evidence" value="ECO:0007669"/>
    <property type="project" value="TreeGrafter"/>
</dbReference>
<dbReference type="GO" id="GO:0005525">
    <property type="term" value="F:GTP binding"/>
    <property type="evidence" value="ECO:0007669"/>
    <property type="project" value="UniProtKB-KW"/>
</dbReference>
<dbReference type="GO" id="GO:0003934">
    <property type="term" value="F:GTP cyclohydrolase I activity"/>
    <property type="evidence" value="ECO:0007669"/>
    <property type="project" value="UniProtKB-UniRule"/>
</dbReference>
<dbReference type="GO" id="GO:0008270">
    <property type="term" value="F:zinc ion binding"/>
    <property type="evidence" value="ECO:0007669"/>
    <property type="project" value="UniProtKB-UniRule"/>
</dbReference>
<dbReference type="GO" id="GO:0006730">
    <property type="term" value="P:one-carbon metabolic process"/>
    <property type="evidence" value="ECO:0007669"/>
    <property type="project" value="UniProtKB-UniRule"/>
</dbReference>
<dbReference type="GO" id="GO:0006729">
    <property type="term" value="P:tetrahydrobiopterin biosynthetic process"/>
    <property type="evidence" value="ECO:0007669"/>
    <property type="project" value="TreeGrafter"/>
</dbReference>
<dbReference type="GO" id="GO:0046654">
    <property type="term" value="P:tetrahydrofolate biosynthetic process"/>
    <property type="evidence" value="ECO:0007669"/>
    <property type="project" value="UniProtKB-UniRule"/>
</dbReference>
<dbReference type="FunFam" id="1.10.286.10:FF:000002">
    <property type="entry name" value="GTP cyclohydrolase 1"/>
    <property type="match status" value="1"/>
</dbReference>
<dbReference type="FunFam" id="3.30.1130.10:FF:000001">
    <property type="entry name" value="GTP cyclohydrolase 1"/>
    <property type="match status" value="1"/>
</dbReference>
<dbReference type="Gene3D" id="1.10.286.10">
    <property type="match status" value="1"/>
</dbReference>
<dbReference type="Gene3D" id="3.30.1130.10">
    <property type="match status" value="1"/>
</dbReference>
<dbReference type="HAMAP" id="MF_00223">
    <property type="entry name" value="FolE"/>
    <property type="match status" value="1"/>
</dbReference>
<dbReference type="InterPro" id="IPR043133">
    <property type="entry name" value="GTP-CH-I_C/QueF"/>
</dbReference>
<dbReference type="InterPro" id="IPR043134">
    <property type="entry name" value="GTP-CH-I_N"/>
</dbReference>
<dbReference type="InterPro" id="IPR001474">
    <property type="entry name" value="GTP_CycHdrlase_I"/>
</dbReference>
<dbReference type="InterPro" id="IPR018234">
    <property type="entry name" value="GTP_CycHdrlase_I_CS"/>
</dbReference>
<dbReference type="InterPro" id="IPR020602">
    <property type="entry name" value="GTP_CycHdrlase_I_dom"/>
</dbReference>
<dbReference type="NCBIfam" id="TIGR00063">
    <property type="entry name" value="folE"/>
    <property type="match status" value="1"/>
</dbReference>
<dbReference type="NCBIfam" id="NF006824">
    <property type="entry name" value="PRK09347.1-1"/>
    <property type="match status" value="1"/>
</dbReference>
<dbReference type="NCBIfam" id="NF006826">
    <property type="entry name" value="PRK09347.1-3"/>
    <property type="match status" value="1"/>
</dbReference>
<dbReference type="PANTHER" id="PTHR11109:SF7">
    <property type="entry name" value="GTP CYCLOHYDROLASE 1"/>
    <property type="match status" value="1"/>
</dbReference>
<dbReference type="PANTHER" id="PTHR11109">
    <property type="entry name" value="GTP CYCLOHYDROLASE I"/>
    <property type="match status" value="1"/>
</dbReference>
<dbReference type="Pfam" id="PF01227">
    <property type="entry name" value="GTP_cyclohydroI"/>
    <property type="match status" value="1"/>
</dbReference>
<dbReference type="SUPFAM" id="SSF55620">
    <property type="entry name" value="Tetrahydrobiopterin biosynthesis enzymes-like"/>
    <property type="match status" value="1"/>
</dbReference>
<dbReference type="PROSITE" id="PS00859">
    <property type="entry name" value="GTP_CYCLOHYDROL_1_1"/>
    <property type="match status" value="1"/>
</dbReference>
<dbReference type="PROSITE" id="PS00860">
    <property type="entry name" value="GTP_CYCLOHYDROL_1_2"/>
    <property type="match status" value="1"/>
</dbReference>
<keyword id="KW-0342">GTP-binding</keyword>
<keyword id="KW-0378">Hydrolase</keyword>
<keyword id="KW-0479">Metal-binding</keyword>
<keyword id="KW-0547">Nucleotide-binding</keyword>
<keyword id="KW-0554">One-carbon metabolism</keyword>
<keyword id="KW-0862">Zinc</keyword>
<accession>A4Y2K7</accession>
<comment type="catalytic activity">
    <reaction evidence="2">
        <text>GTP + H2O = 7,8-dihydroneopterin 3'-triphosphate + formate + H(+)</text>
        <dbReference type="Rhea" id="RHEA:17473"/>
        <dbReference type="ChEBI" id="CHEBI:15377"/>
        <dbReference type="ChEBI" id="CHEBI:15378"/>
        <dbReference type="ChEBI" id="CHEBI:15740"/>
        <dbReference type="ChEBI" id="CHEBI:37565"/>
        <dbReference type="ChEBI" id="CHEBI:58462"/>
        <dbReference type="EC" id="3.5.4.16"/>
    </reaction>
</comment>
<comment type="pathway">
    <text evidence="2">Cofactor biosynthesis; 7,8-dihydroneopterin triphosphate biosynthesis; 7,8-dihydroneopterin triphosphate from GTP: step 1/1.</text>
</comment>
<comment type="subunit">
    <text evidence="1">Toroid-shaped homodecamer, composed of two pentamers of five dimers.</text>
</comment>
<comment type="similarity">
    <text evidence="2">Belongs to the GTP cyclohydrolase I family.</text>
</comment>
<proteinExistence type="inferred from homology"/>
<feature type="chain" id="PRO_1000043733" description="GTP cyclohydrolase 1">
    <location>
        <begin position="1"/>
        <end position="214"/>
    </location>
</feature>
<feature type="binding site" evidence="2">
    <location>
        <position position="108"/>
    </location>
    <ligand>
        <name>Zn(2+)</name>
        <dbReference type="ChEBI" id="CHEBI:29105"/>
    </ligand>
</feature>
<feature type="binding site" evidence="2">
    <location>
        <position position="111"/>
    </location>
    <ligand>
        <name>Zn(2+)</name>
        <dbReference type="ChEBI" id="CHEBI:29105"/>
    </ligand>
</feature>
<feature type="binding site" evidence="2">
    <location>
        <position position="179"/>
    </location>
    <ligand>
        <name>Zn(2+)</name>
        <dbReference type="ChEBI" id="CHEBI:29105"/>
    </ligand>
</feature>